<name>PSBN_LOBMA</name>
<evidence type="ECO:0000255" key="1">
    <source>
        <dbReference type="HAMAP-Rule" id="MF_00293"/>
    </source>
</evidence>
<geneLocation type="chloroplast"/>
<sequence length="43" mass="4722">METATLVAIFISGLLVSFTGYALYTAFGQPSQQLRDPFEEHGD</sequence>
<comment type="function">
    <text evidence="1">May play a role in photosystem I and II biogenesis.</text>
</comment>
<comment type="subcellular location">
    <subcellularLocation>
        <location evidence="1">Plastid</location>
        <location evidence="1">Chloroplast thylakoid membrane</location>
        <topology evidence="1">Single-pass membrane protein</topology>
    </subcellularLocation>
</comment>
<comment type="similarity">
    <text evidence="1">Belongs to the PsbN family.</text>
</comment>
<comment type="caution">
    <text evidence="1">Originally thought to be a component of PSII; based on experiments in Synechocystis, N.tabacum and barley, and its absence from PSII in T.elongatus and T.vulcanus, this is probably not true.</text>
</comment>
<accession>A4QLM2</accession>
<dbReference type="EMBL" id="AP009375">
    <property type="protein sequence ID" value="BAF50577.1"/>
    <property type="molecule type" value="Genomic_DNA"/>
</dbReference>
<dbReference type="RefSeq" id="YP_001123753.1">
    <property type="nucleotide sequence ID" value="NC_009274.1"/>
</dbReference>
<dbReference type="SMR" id="A4QLM2"/>
<dbReference type="GeneID" id="4964873"/>
<dbReference type="GO" id="GO:0009535">
    <property type="term" value="C:chloroplast thylakoid membrane"/>
    <property type="evidence" value="ECO:0007669"/>
    <property type="project" value="UniProtKB-SubCell"/>
</dbReference>
<dbReference type="GO" id="GO:0015979">
    <property type="term" value="P:photosynthesis"/>
    <property type="evidence" value="ECO:0007669"/>
    <property type="project" value="InterPro"/>
</dbReference>
<dbReference type="HAMAP" id="MF_00293">
    <property type="entry name" value="PSII_PsbN"/>
    <property type="match status" value="1"/>
</dbReference>
<dbReference type="InterPro" id="IPR003398">
    <property type="entry name" value="PSII_PsbN"/>
</dbReference>
<dbReference type="PANTHER" id="PTHR35326">
    <property type="entry name" value="PROTEIN PSBN"/>
    <property type="match status" value="1"/>
</dbReference>
<dbReference type="PANTHER" id="PTHR35326:SF3">
    <property type="entry name" value="PROTEIN PSBN"/>
    <property type="match status" value="1"/>
</dbReference>
<dbReference type="Pfam" id="PF02468">
    <property type="entry name" value="PsbN"/>
    <property type="match status" value="1"/>
</dbReference>
<keyword id="KW-0150">Chloroplast</keyword>
<keyword id="KW-0472">Membrane</keyword>
<keyword id="KW-0934">Plastid</keyword>
<keyword id="KW-0793">Thylakoid</keyword>
<keyword id="KW-0812">Transmembrane</keyword>
<keyword id="KW-1133">Transmembrane helix</keyword>
<protein>
    <recommendedName>
        <fullName evidence="1">Protein PsbN</fullName>
    </recommendedName>
</protein>
<proteinExistence type="inferred from homology"/>
<feature type="chain" id="PRO_0000362201" description="Protein PsbN">
    <location>
        <begin position="1"/>
        <end position="43"/>
    </location>
</feature>
<feature type="transmembrane region" description="Helical" evidence="1">
    <location>
        <begin position="7"/>
        <end position="27"/>
    </location>
</feature>
<organism>
    <name type="scientific">Lobularia maritima</name>
    <name type="common">Sweet alyssum</name>
    <name type="synonym">Alyssum maritimum</name>
    <dbReference type="NCBI Taxonomy" id="226051"/>
    <lineage>
        <taxon>Eukaryota</taxon>
        <taxon>Viridiplantae</taxon>
        <taxon>Streptophyta</taxon>
        <taxon>Embryophyta</taxon>
        <taxon>Tracheophyta</taxon>
        <taxon>Spermatophyta</taxon>
        <taxon>Magnoliopsida</taxon>
        <taxon>eudicotyledons</taxon>
        <taxon>Gunneridae</taxon>
        <taxon>Pentapetalae</taxon>
        <taxon>rosids</taxon>
        <taxon>malvids</taxon>
        <taxon>Brassicales</taxon>
        <taxon>Brassicaceae</taxon>
        <taxon>Anastaticeae</taxon>
        <taxon>Lobularia</taxon>
    </lineage>
</organism>
<reference key="1">
    <citation type="submission" date="2007-03" db="EMBL/GenBank/DDBJ databases">
        <title>Sequencing analysis of Lobularia maritima chloroplast DNA.</title>
        <authorList>
            <person name="Hosouchi T."/>
            <person name="Tsuruoka H."/>
            <person name="Kotani H."/>
        </authorList>
    </citation>
    <scope>NUCLEOTIDE SEQUENCE [LARGE SCALE GENOMIC DNA]</scope>
</reference>
<gene>
    <name evidence="1" type="primary">psbN</name>
</gene>